<evidence type="ECO:0000255" key="1">
    <source>
        <dbReference type="HAMAP-Rule" id="MF_00185"/>
    </source>
</evidence>
<protein>
    <recommendedName>
        <fullName evidence="1">tRNA dimethylallyltransferase</fullName>
        <ecNumber evidence="1">2.5.1.75</ecNumber>
    </recommendedName>
    <alternativeName>
        <fullName evidence="1">Dimethylallyl diphosphate:tRNA dimethylallyltransferase</fullName>
        <shortName evidence="1">DMAPP:tRNA dimethylallyltransferase</shortName>
        <shortName evidence="1">DMATase</shortName>
    </alternativeName>
    <alternativeName>
        <fullName evidence="1">Isopentenyl-diphosphate:tRNA isopentenyltransferase</fullName>
        <shortName evidence="1">IPP transferase</shortName>
        <shortName evidence="1">IPPT</shortName>
        <shortName evidence="1">IPTase</shortName>
    </alternativeName>
</protein>
<dbReference type="EC" id="2.5.1.75" evidence="1"/>
<dbReference type="EMBL" id="AM398681">
    <property type="protein sequence ID" value="CAL43982.1"/>
    <property type="molecule type" value="Genomic_DNA"/>
</dbReference>
<dbReference type="RefSeq" id="WP_011964020.1">
    <property type="nucleotide sequence ID" value="NC_009613.3"/>
</dbReference>
<dbReference type="RefSeq" id="YP_001296784.1">
    <property type="nucleotide sequence ID" value="NC_009613.3"/>
</dbReference>
<dbReference type="SMR" id="A6H0V8"/>
<dbReference type="STRING" id="402612.FP1916"/>
<dbReference type="EnsemblBacteria" id="CAL43982">
    <property type="protein sequence ID" value="CAL43982"/>
    <property type="gene ID" value="FP1916"/>
</dbReference>
<dbReference type="GeneID" id="66551900"/>
<dbReference type="KEGG" id="fps:FP1916"/>
<dbReference type="PATRIC" id="fig|402612.5.peg.1942"/>
<dbReference type="eggNOG" id="COG0324">
    <property type="taxonomic scope" value="Bacteria"/>
</dbReference>
<dbReference type="HOGENOM" id="CLU_032616_0_1_10"/>
<dbReference type="OrthoDB" id="9776390at2"/>
<dbReference type="Proteomes" id="UP000006394">
    <property type="component" value="Chromosome"/>
</dbReference>
<dbReference type="GO" id="GO:0005524">
    <property type="term" value="F:ATP binding"/>
    <property type="evidence" value="ECO:0007669"/>
    <property type="project" value="UniProtKB-UniRule"/>
</dbReference>
<dbReference type="GO" id="GO:0052381">
    <property type="term" value="F:tRNA dimethylallyltransferase activity"/>
    <property type="evidence" value="ECO:0007669"/>
    <property type="project" value="UniProtKB-UniRule"/>
</dbReference>
<dbReference type="GO" id="GO:0006400">
    <property type="term" value="P:tRNA modification"/>
    <property type="evidence" value="ECO:0007669"/>
    <property type="project" value="TreeGrafter"/>
</dbReference>
<dbReference type="Gene3D" id="1.10.20.140">
    <property type="match status" value="1"/>
</dbReference>
<dbReference type="Gene3D" id="3.40.50.300">
    <property type="entry name" value="P-loop containing nucleotide triphosphate hydrolases"/>
    <property type="match status" value="1"/>
</dbReference>
<dbReference type="HAMAP" id="MF_00185">
    <property type="entry name" value="IPP_trans"/>
    <property type="match status" value="1"/>
</dbReference>
<dbReference type="InterPro" id="IPR039657">
    <property type="entry name" value="Dimethylallyltransferase"/>
</dbReference>
<dbReference type="InterPro" id="IPR018022">
    <property type="entry name" value="IPT"/>
</dbReference>
<dbReference type="InterPro" id="IPR027417">
    <property type="entry name" value="P-loop_NTPase"/>
</dbReference>
<dbReference type="NCBIfam" id="TIGR00174">
    <property type="entry name" value="miaA"/>
    <property type="match status" value="1"/>
</dbReference>
<dbReference type="PANTHER" id="PTHR11088">
    <property type="entry name" value="TRNA DIMETHYLALLYLTRANSFERASE"/>
    <property type="match status" value="1"/>
</dbReference>
<dbReference type="PANTHER" id="PTHR11088:SF60">
    <property type="entry name" value="TRNA DIMETHYLALLYLTRANSFERASE"/>
    <property type="match status" value="1"/>
</dbReference>
<dbReference type="Pfam" id="PF01715">
    <property type="entry name" value="IPPT"/>
    <property type="match status" value="1"/>
</dbReference>
<dbReference type="SUPFAM" id="SSF52540">
    <property type="entry name" value="P-loop containing nucleoside triphosphate hydrolases"/>
    <property type="match status" value="2"/>
</dbReference>
<accession>A6H0V8</accession>
<gene>
    <name evidence="1" type="primary">miaA</name>
    <name type="ordered locus">FP1916</name>
</gene>
<reference key="1">
    <citation type="journal article" date="2007" name="Nat. Biotechnol.">
        <title>Complete genome sequence of the fish pathogen Flavobacterium psychrophilum.</title>
        <authorList>
            <person name="Duchaud E."/>
            <person name="Boussaha M."/>
            <person name="Loux V."/>
            <person name="Bernardet J.-F."/>
            <person name="Michel C."/>
            <person name="Kerouault B."/>
            <person name="Mondot S."/>
            <person name="Nicolas P."/>
            <person name="Bossy R."/>
            <person name="Caron C."/>
            <person name="Bessieres P."/>
            <person name="Gibrat J.-F."/>
            <person name="Claverol S."/>
            <person name="Dumetz F."/>
            <person name="Le Henaff M."/>
            <person name="Benmansour A."/>
        </authorList>
    </citation>
    <scope>NUCLEOTIDE SEQUENCE [LARGE SCALE GENOMIC DNA]</scope>
    <source>
        <strain>ATCC 49511 / DSM 21280 / CIP 103535 / JIP02/86</strain>
    </source>
</reference>
<organism>
    <name type="scientific">Flavobacterium psychrophilum (strain ATCC 49511 / DSM 21280 / CIP 103535 / JIP02/86)</name>
    <dbReference type="NCBI Taxonomy" id="402612"/>
    <lineage>
        <taxon>Bacteria</taxon>
        <taxon>Pseudomonadati</taxon>
        <taxon>Bacteroidota</taxon>
        <taxon>Flavobacteriia</taxon>
        <taxon>Flavobacteriales</taxon>
        <taxon>Flavobacteriaceae</taxon>
        <taxon>Flavobacterium</taxon>
    </lineage>
</organism>
<feature type="chain" id="PRO_0000377163" description="tRNA dimethylallyltransferase">
    <location>
        <begin position="1"/>
        <end position="307"/>
    </location>
</feature>
<feature type="region of interest" description="Interaction with substrate tRNA" evidence="1">
    <location>
        <begin position="34"/>
        <end position="37"/>
    </location>
</feature>
<feature type="region of interest" description="Interaction with substrate tRNA" evidence="1">
    <location>
        <begin position="164"/>
        <end position="168"/>
    </location>
</feature>
<feature type="binding site" evidence="1">
    <location>
        <begin position="9"/>
        <end position="16"/>
    </location>
    <ligand>
        <name>ATP</name>
        <dbReference type="ChEBI" id="CHEBI:30616"/>
    </ligand>
</feature>
<feature type="binding site" evidence="1">
    <location>
        <begin position="11"/>
        <end position="16"/>
    </location>
    <ligand>
        <name>substrate</name>
    </ligand>
</feature>
<feature type="site" description="Interaction with substrate tRNA" evidence="1">
    <location>
        <position position="100"/>
    </location>
</feature>
<feature type="site" description="Interaction with substrate tRNA" evidence="1">
    <location>
        <position position="122"/>
    </location>
</feature>
<name>MIAA_FLAPJ</name>
<proteinExistence type="inferred from homology"/>
<comment type="function">
    <text evidence="1">Catalyzes the transfer of a dimethylallyl group onto the adenine at position 37 in tRNAs that read codons beginning with uridine, leading to the formation of N6-(dimethylallyl)adenosine (i(6)A).</text>
</comment>
<comment type="catalytic activity">
    <reaction evidence="1">
        <text>adenosine(37) in tRNA + dimethylallyl diphosphate = N(6)-dimethylallyladenosine(37) in tRNA + diphosphate</text>
        <dbReference type="Rhea" id="RHEA:26482"/>
        <dbReference type="Rhea" id="RHEA-COMP:10162"/>
        <dbReference type="Rhea" id="RHEA-COMP:10375"/>
        <dbReference type="ChEBI" id="CHEBI:33019"/>
        <dbReference type="ChEBI" id="CHEBI:57623"/>
        <dbReference type="ChEBI" id="CHEBI:74411"/>
        <dbReference type="ChEBI" id="CHEBI:74415"/>
        <dbReference type="EC" id="2.5.1.75"/>
    </reaction>
</comment>
<comment type="cofactor">
    <cofactor evidence="1">
        <name>Mg(2+)</name>
        <dbReference type="ChEBI" id="CHEBI:18420"/>
    </cofactor>
</comment>
<comment type="subunit">
    <text evidence="1">Monomer.</text>
</comment>
<comment type="similarity">
    <text evidence="1">Belongs to the IPP transferase family.</text>
</comment>
<keyword id="KW-0067">ATP-binding</keyword>
<keyword id="KW-0460">Magnesium</keyword>
<keyword id="KW-0547">Nucleotide-binding</keyword>
<keyword id="KW-1185">Reference proteome</keyword>
<keyword id="KW-0808">Transferase</keyword>
<keyword id="KW-0819">tRNA processing</keyword>
<sequence length="307" mass="35718">MNYLITIIGPTAIGKTSLSIALAKQYNCDIISCDSRQFFKEMRIGTAVPSDEELSQATHHFIQNKSIFEEYTVGDFEKEAITKLDELFSKNNIQIMVGGSGLYADAVLKGFDSFPNIKPEIREKIQEQYDENGIQYLQQKLQELDTEYYSKILSQNPQTLQNPQRMMRFVEVCLGTGKPYSSFLNKDKITRNFTTIIIGLEADREIMYDRINQRVDIMINEGLLAEAEKLYPNKDLNALQTVGYRELFSFFDADFTLNFAIEEIKKNTRRFSKRQITWFKRTENTIWFDYKADTSKIIEVINTKMKH</sequence>